<reference key="1">
    <citation type="journal article" date="2004" name="Proc. Natl. Acad. Sci. U.S.A.">
        <title>Insights into the evolution of Yersinia pestis through whole-genome comparison with Yersinia pseudotuberculosis.</title>
        <authorList>
            <person name="Chain P.S.G."/>
            <person name="Carniel E."/>
            <person name="Larimer F.W."/>
            <person name="Lamerdin J."/>
            <person name="Stoutland P.O."/>
            <person name="Regala W.M."/>
            <person name="Georgescu A.M."/>
            <person name="Vergez L.M."/>
            <person name="Land M.L."/>
            <person name="Motin V.L."/>
            <person name="Brubaker R.R."/>
            <person name="Fowler J."/>
            <person name="Hinnebusch J."/>
            <person name="Marceau M."/>
            <person name="Medigue C."/>
            <person name="Simonet M."/>
            <person name="Chenal-Francisque V."/>
            <person name="Souza B."/>
            <person name="Dacheux D."/>
            <person name="Elliott J.M."/>
            <person name="Derbise A."/>
            <person name="Hauser L.J."/>
            <person name="Garcia E."/>
        </authorList>
    </citation>
    <scope>NUCLEOTIDE SEQUENCE [LARGE SCALE GENOMIC DNA]</scope>
    <source>
        <strain>IP32953</strain>
    </source>
</reference>
<evidence type="ECO:0000255" key="1">
    <source>
        <dbReference type="HAMAP-Rule" id="MF_01374"/>
    </source>
</evidence>
<keyword id="KW-0378">Hydrolase</keyword>
<keyword id="KW-0479">Metal-binding</keyword>
<keyword id="KW-0862">Zinc</keyword>
<feature type="chain" id="PRO_0000309731" description="Hydroxyacylglutathione hydrolase">
    <location>
        <begin position="1"/>
        <end position="251"/>
    </location>
</feature>
<feature type="binding site" evidence="1">
    <location>
        <position position="53"/>
    </location>
    <ligand>
        <name>Zn(2+)</name>
        <dbReference type="ChEBI" id="CHEBI:29105"/>
        <label>1</label>
    </ligand>
</feature>
<feature type="binding site" evidence="1">
    <location>
        <position position="55"/>
    </location>
    <ligand>
        <name>Zn(2+)</name>
        <dbReference type="ChEBI" id="CHEBI:29105"/>
        <label>1</label>
    </ligand>
</feature>
<feature type="binding site" evidence="1">
    <location>
        <position position="57"/>
    </location>
    <ligand>
        <name>Zn(2+)</name>
        <dbReference type="ChEBI" id="CHEBI:29105"/>
        <label>2</label>
    </ligand>
</feature>
<feature type="binding site" evidence="1">
    <location>
        <position position="58"/>
    </location>
    <ligand>
        <name>Zn(2+)</name>
        <dbReference type="ChEBI" id="CHEBI:29105"/>
        <label>2</label>
    </ligand>
</feature>
<feature type="binding site" evidence="1">
    <location>
        <position position="110"/>
    </location>
    <ligand>
        <name>Zn(2+)</name>
        <dbReference type="ChEBI" id="CHEBI:29105"/>
        <label>1</label>
    </ligand>
</feature>
<feature type="binding site" evidence="1">
    <location>
        <position position="127"/>
    </location>
    <ligand>
        <name>Zn(2+)</name>
        <dbReference type="ChEBI" id="CHEBI:29105"/>
        <label>1</label>
    </ligand>
</feature>
<feature type="binding site" evidence="1">
    <location>
        <position position="127"/>
    </location>
    <ligand>
        <name>Zn(2+)</name>
        <dbReference type="ChEBI" id="CHEBI:29105"/>
        <label>2</label>
    </ligand>
</feature>
<feature type="binding site" evidence="1">
    <location>
        <position position="165"/>
    </location>
    <ligand>
        <name>Zn(2+)</name>
        <dbReference type="ChEBI" id="CHEBI:29105"/>
        <label>2</label>
    </ligand>
</feature>
<name>GLO2_YERPS</name>
<dbReference type="EC" id="3.1.2.6" evidence="1"/>
<dbReference type="EMBL" id="BX936398">
    <property type="protein sequence ID" value="CAH22205.1"/>
    <property type="molecule type" value="Genomic_DNA"/>
</dbReference>
<dbReference type="RefSeq" id="WP_011192852.1">
    <property type="nucleotide sequence ID" value="NC_006155.1"/>
</dbReference>
<dbReference type="SMR" id="Q667M5"/>
<dbReference type="GeneID" id="49785020"/>
<dbReference type="KEGG" id="ypo:BZ17_3659"/>
<dbReference type="KEGG" id="yps:YPTB2967"/>
<dbReference type="PATRIC" id="fig|273123.14.peg.3835"/>
<dbReference type="UniPathway" id="UPA00619">
    <property type="reaction ID" value="UER00676"/>
</dbReference>
<dbReference type="Proteomes" id="UP000001011">
    <property type="component" value="Chromosome"/>
</dbReference>
<dbReference type="GO" id="GO:0004416">
    <property type="term" value="F:hydroxyacylglutathione hydrolase activity"/>
    <property type="evidence" value="ECO:0007669"/>
    <property type="project" value="UniProtKB-UniRule"/>
</dbReference>
<dbReference type="GO" id="GO:0046872">
    <property type="term" value="F:metal ion binding"/>
    <property type="evidence" value="ECO:0007669"/>
    <property type="project" value="UniProtKB-KW"/>
</dbReference>
<dbReference type="GO" id="GO:0019243">
    <property type="term" value="P:methylglyoxal catabolic process to D-lactate via S-lactoyl-glutathione"/>
    <property type="evidence" value="ECO:0007669"/>
    <property type="project" value="InterPro"/>
</dbReference>
<dbReference type="CDD" id="cd07723">
    <property type="entry name" value="hydroxyacylglutathione_hydrolase_MBL-fold"/>
    <property type="match status" value="1"/>
</dbReference>
<dbReference type="Gene3D" id="3.60.15.10">
    <property type="entry name" value="Ribonuclease Z/Hydroxyacylglutathione hydrolase-like"/>
    <property type="match status" value="1"/>
</dbReference>
<dbReference type="HAMAP" id="MF_01374">
    <property type="entry name" value="Glyoxalase_2"/>
    <property type="match status" value="1"/>
</dbReference>
<dbReference type="InterPro" id="IPR035680">
    <property type="entry name" value="Clx_II_MBL"/>
</dbReference>
<dbReference type="InterPro" id="IPR050110">
    <property type="entry name" value="Glyoxalase_II_hydrolase"/>
</dbReference>
<dbReference type="InterPro" id="IPR032282">
    <property type="entry name" value="HAGH_C"/>
</dbReference>
<dbReference type="InterPro" id="IPR017782">
    <property type="entry name" value="Hydroxyacylglutathione_Hdrlase"/>
</dbReference>
<dbReference type="InterPro" id="IPR001279">
    <property type="entry name" value="Metallo-B-lactamas"/>
</dbReference>
<dbReference type="InterPro" id="IPR036866">
    <property type="entry name" value="RibonucZ/Hydroxyglut_hydro"/>
</dbReference>
<dbReference type="NCBIfam" id="TIGR03413">
    <property type="entry name" value="GSH_gloB"/>
    <property type="match status" value="1"/>
</dbReference>
<dbReference type="PANTHER" id="PTHR43705">
    <property type="entry name" value="HYDROXYACYLGLUTATHIONE HYDROLASE"/>
    <property type="match status" value="1"/>
</dbReference>
<dbReference type="PANTHER" id="PTHR43705:SF1">
    <property type="entry name" value="HYDROXYACYLGLUTATHIONE HYDROLASE GLOB"/>
    <property type="match status" value="1"/>
</dbReference>
<dbReference type="Pfam" id="PF16123">
    <property type="entry name" value="HAGH_C"/>
    <property type="match status" value="1"/>
</dbReference>
<dbReference type="Pfam" id="PF00753">
    <property type="entry name" value="Lactamase_B"/>
    <property type="match status" value="1"/>
</dbReference>
<dbReference type="PIRSF" id="PIRSF005457">
    <property type="entry name" value="Glx"/>
    <property type="match status" value="1"/>
</dbReference>
<dbReference type="SMART" id="SM00849">
    <property type="entry name" value="Lactamase_B"/>
    <property type="match status" value="1"/>
</dbReference>
<dbReference type="SUPFAM" id="SSF56281">
    <property type="entry name" value="Metallo-hydrolase/oxidoreductase"/>
    <property type="match status" value="1"/>
</dbReference>
<protein>
    <recommendedName>
        <fullName evidence="1">Hydroxyacylglutathione hydrolase</fullName>
        <ecNumber evidence="1">3.1.2.6</ecNumber>
    </recommendedName>
    <alternativeName>
        <fullName evidence="1">Glyoxalase II</fullName>
        <shortName evidence="1">Glx II</shortName>
    </alternativeName>
</protein>
<sequence length="251" mass="27848">MNLISIPAFQDNYIWLLANRQKHCVIVDPGESAPVLATLAQGQYVPQAILLTHHHNDHVGGVADLRHHFPDIPVYGPQETAKKGATVIVNDGDSLTIAGQNYTIIAVPGHTLGHIAYYSSPYLFCGDTLFSAGCGRLLEGTPEQMYASIQRLAQLPDETLICCAHEYTLSNLKFAHAILPADQDIATYQQQIEQLRSKNLPSLPVKLQFERKINVFLRCNDIDLQRKIGITSPPDSLVSVFCELRSRKDSF</sequence>
<comment type="function">
    <text evidence="1">Thiolesterase that catalyzes the hydrolysis of S-D-lactoyl-glutathione to form glutathione and D-lactic acid.</text>
</comment>
<comment type="catalytic activity">
    <reaction evidence="1">
        <text>an S-(2-hydroxyacyl)glutathione + H2O = a 2-hydroxy carboxylate + glutathione + H(+)</text>
        <dbReference type="Rhea" id="RHEA:21864"/>
        <dbReference type="ChEBI" id="CHEBI:15377"/>
        <dbReference type="ChEBI" id="CHEBI:15378"/>
        <dbReference type="ChEBI" id="CHEBI:57925"/>
        <dbReference type="ChEBI" id="CHEBI:58896"/>
        <dbReference type="ChEBI" id="CHEBI:71261"/>
        <dbReference type="EC" id="3.1.2.6"/>
    </reaction>
</comment>
<comment type="cofactor">
    <cofactor evidence="1">
        <name>Zn(2+)</name>
        <dbReference type="ChEBI" id="CHEBI:29105"/>
    </cofactor>
    <text evidence="1">Binds 2 Zn(2+) ions per subunit.</text>
</comment>
<comment type="pathway">
    <text evidence="1">Secondary metabolite metabolism; methylglyoxal degradation; (R)-lactate from methylglyoxal: step 2/2.</text>
</comment>
<comment type="subunit">
    <text evidence="1">Monomer.</text>
</comment>
<comment type="similarity">
    <text evidence="1">Belongs to the metallo-beta-lactamase superfamily. Glyoxalase II family.</text>
</comment>
<gene>
    <name evidence="1" type="primary">gloB</name>
    <name type="ordered locus">YPTB2967</name>
</gene>
<accession>Q667M5</accession>
<proteinExistence type="inferred from homology"/>
<organism>
    <name type="scientific">Yersinia pseudotuberculosis serotype I (strain IP32953)</name>
    <dbReference type="NCBI Taxonomy" id="273123"/>
    <lineage>
        <taxon>Bacteria</taxon>
        <taxon>Pseudomonadati</taxon>
        <taxon>Pseudomonadota</taxon>
        <taxon>Gammaproteobacteria</taxon>
        <taxon>Enterobacterales</taxon>
        <taxon>Yersiniaceae</taxon>
        <taxon>Yersinia</taxon>
    </lineage>
</organism>